<accession>E6ZZ11</accession>
<proteinExistence type="inferred from homology"/>
<keyword id="KW-0125">Carotenoid biosynthesis</keyword>
<keyword id="KW-0413">Isomerase</keyword>
<keyword id="KW-0472">Membrane</keyword>
<keyword id="KW-0511">Multifunctional enzyme</keyword>
<keyword id="KW-0808">Transferase</keyword>
<keyword id="KW-0812">Transmembrane</keyword>
<keyword id="KW-1133">Transmembrane helix</keyword>
<sequence>MTRLYQPSQDWPACTLSYRHFHLLWTLPLCAVLFLVARPFLTKLDRAKLILLPIIAFVWTTPWDNLIVKNRAWFYHRHCIWFTIGYVPIEEYFFFVIQSLISTLWCTLLTRWALPNLYLVPSSPKRRRLATPAVVVCMLCFVLGLKAAVPETHSYYFGMITWWSSLPLALLLWGSVDFVSNMGVRAGLAPFALSVLAPTFYLWASDVYALRRGTWHINEATSLNVFPIPHLPIEEMLFFLVTNLILVSACFTFDRCVAICRQSVAENAPPLSPSYLPLGSLDTYTKLWAAFVRSDRPPVATSAASASVEPRDLAASLQVLRAASKSFNAASLLLPWDLRTDLGCLYAFCRVADDLVDDDAQGLEAKSSNLDVIRAIVDAIYADSPEAAPQKQPSAQPVSDRIRTLLAPVALPDKVKQDTRAAAASIAPLTRYIPKRLWYEMLQGYSLDLLFEHPDADKRTRLRTMDDLVEYSQCVAGVVGEMCTRVILGRCGGAVPLELKVDRTIAVPSTKAAMAGKALDLTRADDVHALLYEARRMGVSLQLVNIARDIVPDSVELRRCYLPTDMFDKQDARMQDALLAGHIAVRSQHTTTLEEKELVQPRDVRKYALRLLRVSRGLYDQAYPALAQIPNRPARAGLKAACSVYAAIGTRIEAQTETDVAEGRRARMSNRDRMLRAVSAVYFGV</sequence>
<protein>
    <recommendedName>
        <fullName evidence="1">Bifunctional lycopene cyclase/phytoene synthase</fullName>
    </recommendedName>
    <domain>
        <recommendedName>
            <fullName evidence="1">Lycopene beta-cyclase</fullName>
            <ecNumber evidence="1">5.5.1.19</ecNumber>
        </recommendedName>
        <alternativeName>
            <fullName evidence="1">Lycopene cyclase</fullName>
        </alternativeName>
    </domain>
    <domain>
        <recommendedName>
            <fullName evidence="1">Phytoene synthase</fullName>
            <ecNumber evidence="1">2.5.1.32</ecNumber>
        </recommendedName>
    </domain>
</protein>
<reference key="1">
    <citation type="journal article" date="2010" name="Science">
        <title>Pathogenicity determinants in smut fungi revealed by genome comparison.</title>
        <authorList>
            <person name="Schirawski J."/>
            <person name="Mannhaupt G."/>
            <person name="Muench K."/>
            <person name="Brefort T."/>
            <person name="Schipper K."/>
            <person name="Doehlemann G."/>
            <person name="Di Stasio M."/>
            <person name="Roessel N."/>
            <person name="Mendoza-Mendoza A."/>
            <person name="Pester D."/>
            <person name="Mueller O."/>
            <person name="Winterberg B."/>
            <person name="Meyer E."/>
            <person name="Ghareeb H."/>
            <person name="Wollenberg T."/>
            <person name="Muensterkoetter M."/>
            <person name="Wong P."/>
            <person name="Walter M."/>
            <person name="Stukenbrock E."/>
            <person name="Gueldener U."/>
            <person name="Kahmann R."/>
        </authorList>
    </citation>
    <scope>NUCLEOTIDE SEQUENCE [LARGE SCALE GENOMIC DNA]</scope>
    <source>
        <strain>SRZ2</strain>
    </source>
</reference>
<name>LCPS_SPORE</name>
<dbReference type="EC" id="5.5.1.19" evidence="1"/>
<dbReference type="EC" id="2.5.1.32" evidence="1"/>
<dbReference type="EMBL" id="FQ311463">
    <property type="protein sequence ID" value="CBQ72468.1"/>
    <property type="molecule type" value="Genomic_DNA"/>
</dbReference>
<dbReference type="SMR" id="E6ZZ11"/>
<dbReference type="EnsemblFungi" id="CBQ72468">
    <property type="protein sequence ID" value="CBQ72468"/>
    <property type="gene ID" value="sr13176"/>
</dbReference>
<dbReference type="VEuPathDB" id="FungiDB:sr13176"/>
<dbReference type="eggNOG" id="ENOG502R13G">
    <property type="taxonomic scope" value="Eukaryota"/>
</dbReference>
<dbReference type="HOGENOM" id="CLU_012965_0_0_1"/>
<dbReference type="OrthoDB" id="6600518at2759"/>
<dbReference type="UniPathway" id="UPA00799">
    <property type="reaction ID" value="UER00773"/>
</dbReference>
<dbReference type="UniPathway" id="UPA00802"/>
<dbReference type="Proteomes" id="UP000008867">
    <property type="component" value="Chromosome 4"/>
</dbReference>
<dbReference type="GO" id="GO:0016020">
    <property type="term" value="C:membrane"/>
    <property type="evidence" value="ECO:0007669"/>
    <property type="project" value="UniProtKB-SubCell"/>
</dbReference>
<dbReference type="GO" id="GO:0004311">
    <property type="term" value="F:geranylgeranyl diphosphate synthase activity"/>
    <property type="evidence" value="ECO:0007669"/>
    <property type="project" value="InterPro"/>
</dbReference>
<dbReference type="GO" id="GO:0016872">
    <property type="term" value="F:intramolecular lyase activity"/>
    <property type="evidence" value="ECO:0007669"/>
    <property type="project" value="InterPro"/>
</dbReference>
<dbReference type="GO" id="GO:0045436">
    <property type="term" value="F:lycopene beta cyclase activity"/>
    <property type="evidence" value="ECO:0007669"/>
    <property type="project" value="UniProtKB-ARBA"/>
</dbReference>
<dbReference type="GO" id="GO:0016117">
    <property type="term" value="P:carotenoid biosynthetic process"/>
    <property type="evidence" value="ECO:0007669"/>
    <property type="project" value="UniProtKB-KW"/>
</dbReference>
<dbReference type="Gene3D" id="1.10.600.10">
    <property type="entry name" value="Farnesyl Diphosphate Synthase"/>
    <property type="match status" value="1"/>
</dbReference>
<dbReference type="InterPro" id="IPR008949">
    <property type="entry name" value="Isoprenoid_synthase_dom_sf"/>
</dbReference>
<dbReference type="InterPro" id="IPR017825">
    <property type="entry name" value="Lycopene_cyclase_dom"/>
</dbReference>
<dbReference type="InterPro" id="IPR002060">
    <property type="entry name" value="Squ/phyt_synthse"/>
</dbReference>
<dbReference type="InterPro" id="IPR019845">
    <property type="entry name" value="Squalene/phytoene_synthase_CS"/>
</dbReference>
<dbReference type="InterPro" id="IPR044843">
    <property type="entry name" value="Trans_IPPS_bact-type"/>
</dbReference>
<dbReference type="NCBIfam" id="TIGR03462">
    <property type="entry name" value="CarR_dom_SF"/>
    <property type="match status" value="2"/>
</dbReference>
<dbReference type="PANTHER" id="PTHR31480">
    <property type="entry name" value="BIFUNCTIONAL LYCOPENE CYCLASE/PHYTOENE SYNTHASE"/>
    <property type="match status" value="1"/>
</dbReference>
<dbReference type="Pfam" id="PF00494">
    <property type="entry name" value="SQS_PSY"/>
    <property type="match status" value="1"/>
</dbReference>
<dbReference type="SFLD" id="SFLDG01212">
    <property type="entry name" value="Phytoene_synthase_like"/>
    <property type="match status" value="1"/>
</dbReference>
<dbReference type="SFLD" id="SFLDG01018">
    <property type="entry name" value="Squalene/Phytoene_Synthase_Lik"/>
    <property type="match status" value="1"/>
</dbReference>
<dbReference type="SUPFAM" id="SSF48576">
    <property type="entry name" value="Terpenoid synthases"/>
    <property type="match status" value="1"/>
</dbReference>
<dbReference type="PROSITE" id="PS01044">
    <property type="entry name" value="SQUALEN_PHYTOEN_SYN_1"/>
    <property type="match status" value="1"/>
</dbReference>
<dbReference type="PROSITE" id="PS01045">
    <property type="entry name" value="SQUALEN_PHYTOEN_SYN_2"/>
    <property type="match status" value="1"/>
</dbReference>
<gene>
    <name type="ORF">sr13176</name>
</gene>
<organism>
    <name type="scientific">Sporisorium reilianum (strain SRZ2)</name>
    <name type="common">Maize head smut fungus</name>
    <dbReference type="NCBI Taxonomy" id="999809"/>
    <lineage>
        <taxon>Eukaryota</taxon>
        <taxon>Fungi</taxon>
        <taxon>Dikarya</taxon>
        <taxon>Basidiomycota</taxon>
        <taxon>Ustilaginomycotina</taxon>
        <taxon>Ustilaginomycetes</taxon>
        <taxon>Ustilaginales</taxon>
        <taxon>Ustilaginaceae</taxon>
        <taxon>Sporisorium</taxon>
    </lineage>
</organism>
<evidence type="ECO:0000250" key="1">
    <source>
        <dbReference type="UniProtKB" id="P37295"/>
    </source>
</evidence>
<evidence type="ECO:0000255" key="2"/>
<evidence type="ECO:0000305" key="3"/>
<comment type="function">
    <text evidence="1">Bifunctional enzyme that catalyzes the reactions from geranylgeranyl diphosphate to phytoene (phytoene synthase) and lycopene to beta-carotene via the intermediate gamma-carotene (lycopene cyclase).</text>
</comment>
<comment type="catalytic activity">
    <reaction evidence="1">
        <text>all-trans-lycopene = gamma-carotene</text>
        <dbReference type="Rhea" id="RHEA:32219"/>
        <dbReference type="ChEBI" id="CHEBI:15948"/>
        <dbReference type="ChEBI" id="CHEBI:27740"/>
        <dbReference type="EC" id="5.5.1.19"/>
    </reaction>
</comment>
<comment type="catalytic activity">
    <reaction evidence="1">
        <text>gamma-carotene = all-trans-beta-carotene</text>
        <dbReference type="Rhea" id="RHEA:32239"/>
        <dbReference type="ChEBI" id="CHEBI:17579"/>
        <dbReference type="ChEBI" id="CHEBI:27740"/>
        <dbReference type="EC" id="5.5.1.19"/>
    </reaction>
</comment>
<comment type="catalytic activity">
    <reaction evidence="1">
        <text>2 (2E,6E,10E)-geranylgeranyl diphosphate = 15-cis-phytoene + 2 diphosphate</text>
        <dbReference type="Rhea" id="RHEA:34475"/>
        <dbReference type="ChEBI" id="CHEBI:27787"/>
        <dbReference type="ChEBI" id="CHEBI:33019"/>
        <dbReference type="ChEBI" id="CHEBI:58756"/>
        <dbReference type="EC" id="2.5.1.32"/>
    </reaction>
</comment>
<comment type="pathway">
    <text evidence="1">Carotenoid biosynthesis; beta-carotene biosynthesis.</text>
</comment>
<comment type="pathway">
    <text evidence="1">Carotenoid biosynthesis; phytoene biosynthesis; all-trans-phytoene from geranylgeranyl diphosphate: step 1/1.</text>
</comment>
<comment type="subcellular location">
    <subcellularLocation>
        <location evidence="3">Membrane</location>
        <topology evidence="3">Multi-pass membrane protein</topology>
    </subcellularLocation>
</comment>
<comment type="similarity">
    <text evidence="3">In the N-terminal section; belongs to the lycopene beta-cyclase family.</text>
</comment>
<comment type="similarity">
    <text evidence="3">In the C-terminal section; belongs to the phytoene/squalene synthase family.</text>
</comment>
<feature type="chain" id="PRO_0000409244" description="Bifunctional lycopene cyclase/phytoene synthase">
    <location>
        <begin position="1"/>
        <end position="685"/>
    </location>
</feature>
<feature type="transmembrane region" description="Helical" evidence="2">
    <location>
        <begin position="21"/>
        <end position="41"/>
    </location>
</feature>
<feature type="transmembrane region" description="Helical" evidence="2">
    <location>
        <begin position="48"/>
        <end position="68"/>
    </location>
</feature>
<feature type="transmembrane region" description="Helical" evidence="2">
    <location>
        <begin position="92"/>
        <end position="114"/>
    </location>
</feature>
<feature type="transmembrane region" description="Helical" evidence="2">
    <location>
        <begin position="129"/>
        <end position="149"/>
    </location>
</feature>
<feature type="transmembrane region" description="Helical" evidence="2">
    <location>
        <begin position="156"/>
        <end position="176"/>
    </location>
</feature>
<feature type="transmembrane region" description="Helical" evidence="2">
    <location>
        <begin position="187"/>
        <end position="207"/>
    </location>
</feature>
<feature type="transmembrane region" description="Helical" evidence="2">
    <location>
        <begin position="231"/>
        <end position="251"/>
    </location>
</feature>
<feature type="region of interest" description="Lycopene beta-cyclase" evidence="1">
    <location>
        <begin position="15"/>
        <end position="255"/>
    </location>
</feature>
<feature type="region of interest" description="Phytoene synthase" evidence="1">
    <location>
        <begin position="262"/>
        <end position="685"/>
    </location>
</feature>